<evidence type="ECO:0000250" key="1">
    <source>
        <dbReference type="UniProtKB" id="P55060"/>
    </source>
</evidence>
<evidence type="ECO:0000250" key="2">
    <source>
        <dbReference type="UniProtKB" id="Q7SZC2"/>
    </source>
</evidence>
<evidence type="ECO:0000255" key="3">
    <source>
        <dbReference type="PROSITE-ProRule" id="PRU00115"/>
    </source>
</evidence>
<evidence type="ECO:0000305" key="4"/>
<reference key="1">
    <citation type="submission" date="2000-01" db="EMBL/GenBank/DDBJ databases">
        <title>Cellular apoptosis susceptibility gene messenger ribonucleic acid in the ovary of red seabream.</title>
        <authorList>
            <person name="Choi C.Y."/>
            <person name="Yoshizaki G."/>
            <person name="Takashima F."/>
        </authorList>
    </citation>
    <scope>NUCLEOTIDE SEQUENCE [MRNA]</scope>
</reference>
<organism>
    <name type="scientific">Pagrus major</name>
    <name type="common">Red sea bream</name>
    <name type="synonym">Chrysophrys major</name>
    <dbReference type="NCBI Taxonomy" id="143350"/>
    <lineage>
        <taxon>Eukaryota</taxon>
        <taxon>Metazoa</taxon>
        <taxon>Chordata</taxon>
        <taxon>Craniata</taxon>
        <taxon>Vertebrata</taxon>
        <taxon>Euteleostomi</taxon>
        <taxon>Actinopterygii</taxon>
        <taxon>Neopterygii</taxon>
        <taxon>Teleostei</taxon>
        <taxon>Neoteleostei</taxon>
        <taxon>Acanthomorphata</taxon>
        <taxon>Eupercaria</taxon>
        <taxon>Spariformes</taxon>
        <taxon>Sparidae</taxon>
        <taxon>Pagrus</taxon>
    </lineage>
</organism>
<gene>
    <name type="primary">cse1l</name>
    <name type="synonym">cas</name>
    <name type="synonym">xpo2</name>
</gene>
<protein>
    <recommendedName>
        <fullName>Exportin-2</fullName>
        <shortName>Exp2</shortName>
    </recommendedName>
    <alternativeName>
        <fullName>Cellular apoptosis susceptibility protein</fullName>
    </alternativeName>
    <alternativeName>
        <fullName>Chromosome segregation 1-like protein</fullName>
    </alternativeName>
    <alternativeName>
        <fullName>Importin-alpha re-exporter</fullName>
    </alternativeName>
</protein>
<sequence length="971" mass="109972">MELNDANLQTLTEFLRKALDPDPTVRRPAEKFLESVEGNQNYPLLLLTLLEKSQDNVIRVCAAVTFKNYIKRNWRVIEDEPNKVSDPDRTAIKANIVNLMLSSPEQIQKQLSDAISIIGREDFPQKWPDLLTEMVTRFRSGDFHIINGVLRTAHSLFKRYRHEFKSNELWSEIKLVLDTFALPLTELFKATIELCQTHATDVNALKVLFSSLTLISKLFYSLNFQDLPEFFEDNMETWMTNFHGLLTLDNKLLQTDDEEEAGLLELLKSQICDNAALYAQKYDEEFQPYLPRFVTAIWNLLVSTGQEVKYDLLVSNAIQFLASVCERPHYKHLFEDQNTLTSICEKVIVPNMEFRSADEEAFEDNSEEYIRRDLEGSDIDTRRRAACDLVRGLCKFFEGPVTAIFSGYVNSMLAEYAKNPGENWKHKDAAIYLVTSLASKAQTQKHGITQANELVNLNEFFVNHILSDLKSHNVNEFPVLKADAIKYVMIFRSQLPKEQLLQAVPLLISHLQAESTVEHTYAAHALERLFTMRGPNNTTLITPVEMAPFTEQLLNNLFKSLALPGSAENEYIMKAIMRTFSLLQEAIVPYIPTLIGQLTHKLLLVSKNPSKPHFNHYLFESLCLSVRITCKANPATVSSFEEALFPVFTEILQNDVQEFLPYVFQVMSLLLEIHSSSIPSSYMALFPHLLQPALWERTGNIPPLVRLLQAYLEKGGATIAASAADKIPGLLGVFQKLIASKANDHQGFYLLNSIIEHMPPESITQYRKQIFILLFQRLQSSKTTKFIKSFLVFVNLYSVKYGAIALQEIFDSIQPKMFGMVLEKIIIPEVQKVSGAVEKKICAVGITKVLTECPAMMDTEYTKLWTPLLQALIGLFELPEDDSIPDDEHFIDIEDTPGYQTAFSQLAFAGKKEHDPIGDAVGNPKILLAQSLHKLSTACPGRVPSMLSTSLNAEALQFLQGYLQAATVQLV</sequence>
<name>XPO2_PAGMA</name>
<accession>Q9PTU3</accession>
<feature type="chain" id="PRO_0000117289" description="Exportin-2">
    <location>
        <begin position="1"/>
        <end position="971"/>
    </location>
</feature>
<feature type="domain" description="Importin N-terminal" evidence="3">
    <location>
        <begin position="29"/>
        <end position="102"/>
    </location>
</feature>
<proteinExistence type="evidence at transcript level"/>
<comment type="function">
    <text evidence="1 2">Export receptor for importin alpha. Mediates importin-alpha re-export from the nucleus to the cytoplasm after import substrates have been released into the nucleoplasm (By similarity). Negatively regulates fluid secretion and plays a role in fluid homeostasis by down-regulating cftr activity (By similarity).</text>
</comment>
<comment type="subunit">
    <text evidence="2">Interacts with cftr.</text>
</comment>
<comment type="subcellular location">
    <subcellularLocation>
        <location evidence="1">Cytoplasm</location>
    </subcellularLocation>
    <subcellularLocation>
        <location evidence="1">Nucleus</location>
    </subcellularLocation>
    <text evidence="1">Shuttles between the nucleus and the cytoplasm.</text>
</comment>
<comment type="similarity">
    <text evidence="4">Belongs to the XPO2/CSE1 family.</text>
</comment>
<dbReference type="EMBL" id="AB036757">
    <property type="protein sequence ID" value="BAA89430.1"/>
    <property type="molecule type" value="mRNA"/>
</dbReference>
<dbReference type="SMR" id="Q9PTU3"/>
<dbReference type="GO" id="GO:0005829">
    <property type="term" value="C:cytosol"/>
    <property type="evidence" value="ECO:0007669"/>
    <property type="project" value="TreeGrafter"/>
</dbReference>
<dbReference type="GO" id="GO:0005635">
    <property type="term" value="C:nuclear envelope"/>
    <property type="evidence" value="ECO:0007669"/>
    <property type="project" value="TreeGrafter"/>
</dbReference>
<dbReference type="GO" id="GO:0005049">
    <property type="term" value="F:nuclear export signal receptor activity"/>
    <property type="evidence" value="ECO:0007669"/>
    <property type="project" value="TreeGrafter"/>
</dbReference>
<dbReference type="GO" id="GO:0031267">
    <property type="term" value="F:small GTPase binding"/>
    <property type="evidence" value="ECO:0007669"/>
    <property type="project" value="InterPro"/>
</dbReference>
<dbReference type="GO" id="GO:0006611">
    <property type="term" value="P:protein export from nucleus"/>
    <property type="evidence" value="ECO:0007669"/>
    <property type="project" value="TreeGrafter"/>
</dbReference>
<dbReference type="GO" id="GO:0006606">
    <property type="term" value="P:protein import into nucleus"/>
    <property type="evidence" value="ECO:0007669"/>
    <property type="project" value="TreeGrafter"/>
</dbReference>
<dbReference type="FunFam" id="1.25.10.10:FF:000057">
    <property type="entry name" value="Exportin-2 isoform 1"/>
    <property type="match status" value="1"/>
</dbReference>
<dbReference type="Gene3D" id="1.25.10.10">
    <property type="entry name" value="Leucine-rich Repeat Variant"/>
    <property type="match status" value="1"/>
</dbReference>
<dbReference type="InterPro" id="IPR011989">
    <property type="entry name" value="ARM-like"/>
</dbReference>
<dbReference type="InterPro" id="IPR016024">
    <property type="entry name" value="ARM-type_fold"/>
</dbReference>
<dbReference type="InterPro" id="IPR001494">
    <property type="entry name" value="Importin-beta_N"/>
</dbReference>
<dbReference type="InterPro" id="IPR005043">
    <property type="entry name" value="XPO2_C"/>
</dbReference>
<dbReference type="InterPro" id="IPR013713">
    <property type="entry name" value="XPO2_central"/>
</dbReference>
<dbReference type="PANTHER" id="PTHR10997:SF8">
    <property type="entry name" value="EXPORTIN-2"/>
    <property type="match status" value="1"/>
</dbReference>
<dbReference type="PANTHER" id="PTHR10997">
    <property type="entry name" value="IMPORTIN-7, 8, 11"/>
    <property type="match status" value="1"/>
</dbReference>
<dbReference type="Pfam" id="PF03378">
    <property type="entry name" value="CAS_CSE1"/>
    <property type="match status" value="1"/>
</dbReference>
<dbReference type="Pfam" id="PF08506">
    <property type="entry name" value="Cse1"/>
    <property type="match status" value="1"/>
</dbReference>
<dbReference type="Pfam" id="PF03810">
    <property type="entry name" value="IBN_N"/>
    <property type="match status" value="1"/>
</dbReference>
<dbReference type="SMART" id="SM00913">
    <property type="entry name" value="IBN_N"/>
    <property type="match status" value="1"/>
</dbReference>
<dbReference type="SUPFAM" id="SSF48371">
    <property type="entry name" value="ARM repeat"/>
    <property type="match status" value="1"/>
</dbReference>
<dbReference type="PROSITE" id="PS50166">
    <property type="entry name" value="IMPORTIN_B_NT"/>
    <property type="match status" value="1"/>
</dbReference>
<keyword id="KW-0963">Cytoplasm</keyword>
<keyword id="KW-0539">Nucleus</keyword>
<keyword id="KW-0653">Protein transport</keyword>
<keyword id="KW-0813">Transport</keyword>